<reference key="1">
    <citation type="submission" date="2008-02" db="EMBL/GenBank/DDBJ databases">
        <title>Complete sequence of Haemophilus somnus 2336.</title>
        <authorList>
            <consortium name="US DOE Joint Genome Institute"/>
            <person name="Siddaramappa S."/>
            <person name="Duncan A.J."/>
            <person name="Challacombe J.F."/>
            <person name="Rainey D."/>
            <person name="Gillaspy A.F."/>
            <person name="Carson M."/>
            <person name="Gipson J."/>
            <person name="Gipson M."/>
            <person name="Bruce D."/>
            <person name="Detter J.C."/>
            <person name="Han C.S."/>
            <person name="Land M."/>
            <person name="Tapia R."/>
            <person name="Thompson L.S."/>
            <person name="Orvis J."/>
            <person name="Zaitshik J."/>
            <person name="Barnes G."/>
            <person name="Brettin T.S."/>
            <person name="Dyer D.W."/>
            <person name="Inzana T.J."/>
        </authorList>
    </citation>
    <scope>NUCLEOTIDE SEQUENCE [LARGE SCALE GENOMIC DNA]</scope>
    <source>
        <strain>2336</strain>
    </source>
</reference>
<comment type="similarity">
    <text evidence="1">Belongs to the UPF0352 family.</text>
</comment>
<proteinExistence type="inferred from homology"/>
<accession>B0UV55</accession>
<evidence type="ECO:0000255" key="1">
    <source>
        <dbReference type="HAMAP-Rule" id="MF_00816"/>
    </source>
</evidence>
<dbReference type="EMBL" id="CP000947">
    <property type="protein sequence ID" value="ACA32656.1"/>
    <property type="molecule type" value="Genomic_DNA"/>
</dbReference>
<dbReference type="RefSeq" id="WP_011608383.1">
    <property type="nucleotide sequence ID" value="NC_010519.1"/>
</dbReference>
<dbReference type="SMR" id="B0UV55"/>
<dbReference type="STRING" id="228400.HSM_0097"/>
<dbReference type="GeneID" id="31486373"/>
<dbReference type="KEGG" id="hsm:HSM_0097"/>
<dbReference type="HOGENOM" id="CLU_175457_0_0_6"/>
<dbReference type="Gene3D" id="1.10.3390.10">
    <property type="entry name" value="YejL-like"/>
    <property type="match status" value="1"/>
</dbReference>
<dbReference type="HAMAP" id="MF_00816">
    <property type="entry name" value="UPF0352"/>
    <property type="match status" value="1"/>
</dbReference>
<dbReference type="InterPro" id="IPR009857">
    <property type="entry name" value="UPF0352"/>
</dbReference>
<dbReference type="InterPro" id="IPR023202">
    <property type="entry name" value="YejL_sf"/>
</dbReference>
<dbReference type="NCBIfam" id="NF010242">
    <property type="entry name" value="PRK13689.1"/>
    <property type="match status" value="1"/>
</dbReference>
<dbReference type="Pfam" id="PF07208">
    <property type="entry name" value="DUF1414"/>
    <property type="match status" value="1"/>
</dbReference>
<dbReference type="PIRSF" id="PIRSF006188">
    <property type="entry name" value="UCP006188"/>
    <property type="match status" value="1"/>
</dbReference>
<dbReference type="SUPFAM" id="SSF158651">
    <property type="entry name" value="YejL-like"/>
    <property type="match status" value="1"/>
</dbReference>
<feature type="chain" id="PRO_1000199591" description="UPF0352 protein HSM_0097">
    <location>
        <begin position="1"/>
        <end position="73"/>
    </location>
</feature>
<gene>
    <name type="ordered locus">HSM_0097</name>
</gene>
<protein>
    <recommendedName>
        <fullName evidence="1">UPF0352 protein HSM_0097</fullName>
    </recommendedName>
</protein>
<sequence>MAKISKFQDKQVEAILNDMIAVLEKHQAPVDLSLVVLGNMVTHLLNSSVGSQQRIVLAKVFSDALMNSVKNSK</sequence>
<organism>
    <name type="scientific">Histophilus somni (strain 2336)</name>
    <name type="common">Haemophilus somnus</name>
    <dbReference type="NCBI Taxonomy" id="228400"/>
    <lineage>
        <taxon>Bacteria</taxon>
        <taxon>Pseudomonadati</taxon>
        <taxon>Pseudomonadota</taxon>
        <taxon>Gammaproteobacteria</taxon>
        <taxon>Pasteurellales</taxon>
        <taxon>Pasteurellaceae</taxon>
        <taxon>Histophilus</taxon>
    </lineage>
</organism>
<name>Y097_HISS2</name>